<sequence length="701" mass="77242">MARKTPINRYRNIGIVAHVDAGKTTTTERVLFYTGLSHKIGEVHDGAATMDWMEQEQERGITITSAATTCFWAGMDKQYDQHRINIIDTPGHVDFTIEVERSLRVLDGAVVVFCGSSGVEPQSETVWRQADKYHVPRVVFVNKMDRAGADFERVVGQIRKRLGATCVPIHLNIGSEENFRGVIDLIKMKAINWNESDQGMTFTYEGIPAELQDRAEALRTELVEAAAEASDELMDKYLEGEELTEEEIKLALRQRTINNEIVLATCGSAFKNKGVQAVLDAVIEFLPAPADVPAITGVLDDKDETEATRPADDEAPFAALAFKIATDPFVGTLTFFRCYSGVVNTGDSVYNPVKAKRERFGRIVQMHAKDREELKEVRAGDIAAAIGLKDVTTGDTLCDPNHIITLERMDFPEPVISIAVEPRSQADQEKMALALGKLAAEDPSFKVNTDEESGQTIISGMGELHLDIIVDRMRREFSVECNVGKPQVAYRETIRGKVDVEGKFVRQSGGRGQFGHVWLTIEPNEEGAGYEFINNIVGGAIPKEFIPSVDKGIHEQMQNGVLAGYPVLDVKVTLFDGSYHDVDSSEMAFKIAGSMGFRKGAAEAKPVLLEPTMKVEVTTPEDWMGDVVGDLNRRRGVIEGMEDGVAGIKIVLAKVPLSEMFGYSTDLRSATQGRASYSMEFFNYSEAPNNVAKAIIDARQS</sequence>
<dbReference type="EMBL" id="CP000388">
    <property type="protein sequence ID" value="ABG39131.1"/>
    <property type="molecule type" value="Genomic_DNA"/>
</dbReference>
<dbReference type="RefSeq" id="WP_011573500.1">
    <property type="nucleotide sequence ID" value="NC_008228.1"/>
</dbReference>
<dbReference type="SMR" id="Q15YA7"/>
<dbReference type="STRING" id="342610.Patl_0602"/>
<dbReference type="KEGG" id="pat:Patl_0602"/>
<dbReference type="eggNOG" id="COG0480">
    <property type="taxonomic scope" value="Bacteria"/>
</dbReference>
<dbReference type="HOGENOM" id="CLU_002794_4_1_6"/>
<dbReference type="OrthoDB" id="9804431at2"/>
<dbReference type="Proteomes" id="UP000001981">
    <property type="component" value="Chromosome"/>
</dbReference>
<dbReference type="GO" id="GO:0005737">
    <property type="term" value="C:cytoplasm"/>
    <property type="evidence" value="ECO:0007669"/>
    <property type="project" value="UniProtKB-SubCell"/>
</dbReference>
<dbReference type="GO" id="GO:0005525">
    <property type="term" value="F:GTP binding"/>
    <property type="evidence" value="ECO:0007669"/>
    <property type="project" value="UniProtKB-UniRule"/>
</dbReference>
<dbReference type="GO" id="GO:0003924">
    <property type="term" value="F:GTPase activity"/>
    <property type="evidence" value="ECO:0007669"/>
    <property type="project" value="InterPro"/>
</dbReference>
<dbReference type="GO" id="GO:0097216">
    <property type="term" value="F:guanosine tetraphosphate binding"/>
    <property type="evidence" value="ECO:0007669"/>
    <property type="project" value="UniProtKB-ARBA"/>
</dbReference>
<dbReference type="GO" id="GO:0003746">
    <property type="term" value="F:translation elongation factor activity"/>
    <property type="evidence" value="ECO:0007669"/>
    <property type="project" value="UniProtKB-UniRule"/>
</dbReference>
<dbReference type="GO" id="GO:0032790">
    <property type="term" value="P:ribosome disassembly"/>
    <property type="evidence" value="ECO:0007669"/>
    <property type="project" value="TreeGrafter"/>
</dbReference>
<dbReference type="CDD" id="cd01886">
    <property type="entry name" value="EF-G"/>
    <property type="match status" value="1"/>
</dbReference>
<dbReference type="CDD" id="cd16262">
    <property type="entry name" value="EFG_III"/>
    <property type="match status" value="1"/>
</dbReference>
<dbReference type="CDD" id="cd01434">
    <property type="entry name" value="EFG_mtEFG1_IV"/>
    <property type="match status" value="1"/>
</dbReference>
<dbReference type="CDD" id="cd03713">
    <property type="entry name" value="EFG_mtEFG_C"/>
    <property type="match status" value="1"/>
</dbReference>
<dbReference type="CDD" id="cd04088">
    <property type="entry name" value="EFG_mtEFG_II"/>
    <property type="match status" value="1"/>
</dbReference>
<dbReference type="FunFam" id="2.40.30.10:FF:000006">
    <property type="entry name" value="Elongation factor G"/>
    <property type="match status" value="1"/>
</dbReference>
<dbReference type="FunFam" id="3.30.230.10:FF:000003">
    <property type="entry name" value="Elongation factor G"/>
    <property type="match status" value="1"/>
</dbReference>
<dbReference type="FunFam" id="3.30.70.240:FF:000001">
    <property type="entry name" value="Elongation factor G"/>
    <property type="match status" value="1"/>
</dbReference>
<dbReference type="FunFam" id="3.30.70.870:FF:000001">
    <property type="entry name" value="Elongation factor G"/>
    <property type="match status" value="1"/>
</dbReference>
<dbReference type="FunFam" id="3.40.50.300:FF:000029">
    <property type="entry name" value="Elongation factor G"/>
    <property type="match status" value="1"/>
</dbReference>
<dbReference type="Gene3D" id="3.30.230.10">
    <property type="match status" value="1"/>
</dbReference>
<dbReference type="Gene3D" id="3.30.70.240">
    <property type="match status" value="1"/>
</dbReference>
<dbReference type="Gene3D" id="3.30.70.870">
    <property type="entry name" value="Elongation Factor G (Translational Gtpase), domain 3"/>
    <property type="match status" value="1"/>
</dbReference>
<dbReference type="Gene3D" id="3.40.50.300">
    <property type="entry name" value="P-loop containing nucleotide triphosphate hydrolases"/>
    <property type="match status" value="1"/>
</dbReference>
<dbReference type="Gene3D" id="2.40.30.10">
    <property type="entry name" value="Translation factors"/>
    <property type="match status" value="1"/>
</dbReference>
<dbReference type="HAMAP" id="MF_00054_B">
    <property type="entry name" value="EF_G_EF_2_B"/>
    <property type="match status" value="1"/>
</dbReference>
<dbReference type="InterPro" id="IPR041095">
    <property type="entry name" value="EFG_II"/>
</dbReference>
<dbReference type="InterPro" id="IPR009022">
    <property type="entry name" value="EFG_III"/>
</dbReference>
<dbReference type="InterPro" id="IPR035647">
    <property type="entry name" value="EFG_III/V"/>
</dbReference>
<dbReference type="InterPro" id="IPR047872">
    <property type="entry name" value="EFG_IV"/>
</dbReference>
<dbReference type="InterPro" id="IPR035649">
    <property type="entry name" value="EFG_V"/>
</dbReference>
<dbReference type="InterPro" id="IPR000640">
    <property type="entry name" value="EFG_V-like"/>
</dbReference>
<dbReference type="InterPro" id="IPR004161">
    <property type="entry name" value="EFTu-like_2"/>
</dbReference>
<dbReference type="InterPro" id="IPR031157">
    <property type="entry name" value="G_TR_CS"/>
</dbReference>
<dbReference type="InterPro" id="IPR027417">
    <property type="entry name" value="P-loop_NTPase"/>
</dbReference>
<dbReference type="InterPro" id="IPR020568">
    <property type="entry name" value="Ribosomal_Su5_D2-typ_SF"/>
</dbReference>
<dbReference type="InterPro" id="IPR014721">
    <property type="entry name" value="Ribsml_uS5_D2-typ_fold_subgr"/>
</dbReference>
<dbReference type="InterPro" id="IPR005225">
    <property type="entry name" value="Small_GTP-bd"/>
</dbReference>
<dbReference type="InterPro" id="IPR000795">
    <property type="entry name" value="T_Tr_GTP-bd_dom"/>
</dbReference>
<dbReference type="InterPro" id="IPR009000">
    <property type="entry name" value="Transl_B-barrel_sf"/>
</dbReference>
<dbReference type="InterPro" id="IPR004540">
    <property type="entry name" value="Transl_elong_EFG/EF2"/>
</dbReference>
<dbReference type="InterPro" id="IPR005517">
    <property type="entry name" value="Transl_elong_EFG/EF2_IV"/>
</dbReference>
<dbReference type="NCBIfam" id="TIGR00484">
    <property type="entry name" value="EF-G"/>
    <property type="match status" value="1"/>
</dbReference>
<dbReference type="NCBIfam" id="NF009381">
    <property type="entry name" value="PRK12740.1-5"/>
    <property type="match status" value="1"/>
</dbReference>
<dbReference type="NCBIfam" id="TIGR00231">
    <property type="entry name" value="small_GTP"/>
    <property type="match status" value="1"/>
</dbReference>
<dbReference type="PANTHER" id="PTHR43261:SF1">
    <property type="entry name" value="RIBOSOME-RELEASING FACTOR 2, MITOCHONDRIAL"/>
    <property type="match status" value="1"/>
</dbReference>
<dbReference type="PANTHER" id="PTHR43261">
    <property type="entry name" value="TRANSLATION ELONGATION FACTOR G-RELATED"/>
    <property type="match status" value="1"/>
</dbReference>
<dbReference type="Pfam" id="PF00679">
    <property type="entry name" value="EFG_C"/>
    <property type="match status" value="1"/>
</dbReference>
<dbReference type="Pfam" id="PF14492">
    <property type="entry name" value="EFG_III"/>
    <property type="match status" value="1"/>
</dbReference>
<dbReference type="Pfam" id="PF03764">
    <property type="entry name" value="EFG_IV"/>
    <property type="match status" value="1"/>
</dbReference>
<dbReference type="Pfam" id="PF00009">
    <property type="entry name" value="GTP_EFTU"/>
    <property type="match status" value="1"/>
</dbReference>
<dbReference type="Pfam" id="PF03144">
    <property type="entry name" value="GTP_EFTU_D2"/>
    <property type="match status" value="1"/>
</dbReference>
<dbReference type="PRINTS" id="PR00315">
    <property type="entry name" value="ELONGATNFCT"/>
</dbReference>
<dbReference type="SMART" id="SM00838">
    <property type="entry name" value="EFG_C"/>
    <property type="match status" value="1"/>
</dbReference>
<dbReference type="SMART" id="SM00889">
    <property type="entry name" value="EFG_IV"/>
    <property type="match status" value="1"/>
</dbReference>
<dbReference type="SUPFAM" id="SSF54980">
    <property type="entry name" value="EF-G C-terminal domain-like"/>
    <property type="match status" value="2"/>
</dbReference>
<dbReference type="SUPFAM" id="SSF52540">
    <property type="entry name" value="P-loop containing nucleoside triphosphate hydrolases"/>
    <property type="match status" value="1"/>
</dbReference>
<dbReference type="SUPFAM" id="SSF54211">
    <property type="entry name" value="Ribosomal protein S5 domain 2-like"/>
    <property type="match status" value="1"/>
</dbReference>
<dbReference type="SUPFAM" id="SSF50447">
    <property type="entry name" value="Translation proteins"/>
    <property type="match status" value="1"/>
</dbReference>
<dbReference type="PROSITE" id="PS00301">
    <property type="entry name" value="G_TR_1"/>
    <property type="match status" value="1"/>
</dbReference>
<dbReference type="PROSITE" id="PS51722">
    <property type="entry name" value="G_TR_2"/>
    <property type="match status" value="1"/>
</dbReference>
<reference key="1">
    <citation type="submission" date="2006-06" db="EMBL/GenBank/DDBJ databases">
        <title>Complete sequence of Pseudoalteromonas atlantica T6c.</title>
        <authorList>
            <consortium name="US DOE Joint Genome Institute"/>
            <person name="Copeland A."/>
            <person name="Lucas S."/>
            <person name="Lapidus A."/>
            <person name="Barry K."/>
            <person name="Detter J.C."/>
            <person name="Glavina del Rio T."/>
            <person name="Hammon N."/>
            <person name="Israni S."/>
            <person name="Dalin E."/>
            <person name="Tice H."/>
            <person name="Pitluck S."/>
            <person name="Saunders E."/>
            <person name="Brettin T."/>
            <person name="Bruce D."/>
            <person name="Han C."/>
            <person name="Tapia R."/>
            <person name="Gilna P."/>
            <person name="Schmutz J."/>
            <person name="Larimer F."/>
            <person name="Land M."/>
            <person name="Hauser L."/>
            <person name="Kyrpides N."/>
            <person name="Kim E."/>
            <person name="Karls A.C."/>
            <person name="Bartlett D."/>
            <person name="Higgins B.P."/>
            <person name="Richardson P."/>
        </authorList>
    </citation>
    <scope>NUCLEOTIDE SEQUENCE [LARGE SCALE GENOMIC DNA]</scope>
    <source>
        <strain>T6c / ATCC BAA-1087</strain>
    </source>
</reference>
<proteinExistence type="inferred from homology"/>
<feature type="chain" id="PRO_0000263485" description="Elongation factor G 2">
    <location>
        <begin position="1"/>
        <end position="701"/>
    </location>
</feature>
<feature type="domain" description="tr-type G">
    <location>
        <begin position="8"/>
        <end position="290"/>
    </location>
</feature>
<feature type="binding site" evidence="1">
    <location>
        <begin position="17"/>
        <end position="24"/>
    </location>
    <ligand>
        <name>GTP</name>
        <dbReference type="ChEBI" id="CHEBI:37565"/>
    </ligand>
</feature>
<feature type="binding site" evidence="1">
    <location>
        <begin position="88"/>
        <end position="92"/>
    </location>
    <ligand>
        <name>GTP</name>
        <dbReference type="ChEBI" id="CHEBI:37565"/>
    </ligand>
</feature>
<feature type="binding site" evidence="1">
    <location>
        <begin position="142"/>
        <end position="145"/>
    </location>
    <ligand>
        <name>GTP</name>
        <dbReference type="ChEBI" id="CHEBI:37565"/>
    </ligand>
</feature>
<protein>
    <recommendedName>
        <fullName evidence="1">Elongation factor G 2</fullName>
        <shortName evidence="1">EF-G 2</shortName>
    </recommendedName>
</protein>
<organism>
    <name type="scientific">Pseudoalteromonas atlantica (strain T6c / ATCC BAA-1087)</name>
    <dbReference type="NCBI Taxonomy" id="3042615"/>
    <lineage>
        <taxon>Bacteria</taxon>
        <taxon>Pseudomonadati</taxon>
        <taxon>Pseudomonadota</taxon>
        <taxon>Gammaproteobacteria</taxon>
        <taxon>Alteromonadales</taxon>
        <taxon>Alteromonadaceae</taxon>
        <taxon>Paraglaciecola</taxon>
    </lineage>
</organism>
<keyword id="KW-0963">Cytoplasm</keyword>
<keyword id="KW-0251">Elongation factor</keyword>
<keyword id="KW-0342">GTP-binding</keyword>
<keyword id="KW-0547">Nucleotide-binding</keyword>
<keyword id="KW-0648">Protein biosynthesis</keyword>
<name>EFG2_PSEA6</name>
<evidence type="ECO:0000255" key="1">
    <source>
        <dbReference type="HAMAP-Rule" id="MF_00054"/>
    </source>
</evidence>
<gene>
    <name evidence="1" type="primary">fusA2</name>
    <name type="ordered locus">Patl_0602</name>
</gene>
<accession>Q15YA7</accession>
<comment type="function">
    <text evidence="1">Catalyzes the GTP-dependent ribosomal translocation step during translation elongation. During this step, the ribosome changes from the pre-translocational (PRE) to the post-translocational (POST) state as the newly formed A-site-bound peptidyl-tRNA and P-site-bound deacylated tRNA move to the P and E sites, respectively. Catalyzes the coordinated movement of the two tRNA molecules, the mRNA and conformational changes in the ribosome.</text>
</comment>
<comment type="subcellular location">
    <subcellularLocation>
        <location evidence="1">Cytoplasm</location>
    </subcellularLocation>
</comment>
<comment type="similarity">
    <text evidence="1">Belongs to the TRAFAC class translation factor GTPase superfamily. Classic translation factor GTPase family. EF-G/EF-2 subfamily.</text>
</comment>